<sequence>MINIRKSHPLMKIVNNAFIDLPTPPNISSWWNFGSLLGICLVLQILTGLFLAMHYTSDTMTAFSSVTHICRDVNYGWIIRYMHANGASMFFICLYMHVGRGLYYGSYTFLETWNIGVILLFTVMATAFMGYVLPWGQMSFWGATVITNLLSAIPYIGTNLVEWIWGGFSVDKATLTRFFAFHFILPFIIAALALVHLLFLHETGSNNPTGISSDTDKIPFHPYYTIKDILGALLLILALMLLVLFAPDLLGDPDNYTPANPLNTPPHIKPEWYFLFAYAILRSIPNKLGGVLALILTILMPILMPLLHASKQRSMMFRPLSQCLFWILVADLLTLTWIGGQPVEHPYIIIGQLASIMYFLLILVLMPMAGSIENNLLKW</sequence>
<dbReference type="EMBL" id="AF022064">
    <property type="protein sequence ID" value="AAD13498.1"/>
    <property type="molecule type" value="Genomic_DNA"/>
</dbReference>
<dbReference type="SMR" id="O20965"/>
<dbReference type="GO" id="GO:0005743">
    <property type="term" value="C:mitochondrial inner membrane"/>
    <property type="evidence" value="ECO:0007669"/>
    <property type="project" value="UniProtKB-SubCell"/>
</dbReference>
<dbReference type="GO" id="GO:0045275">
    <property type="term" value="C:respiratory chain complex III"/>
    <property type="evidence" value="ECO:0007669"/>
    <property type="project" value="InterPro"/>
</dbReference>
<dbReference type="GO" id="GO:0046872">
    <property type="term" value="F:metal ion binding"/>
    <property type="evidence" value="ECO:0007669"/>
    <property type="project" value="UniProtKB-KW"/>
</dbReference>
<dbReference type="GO" id="GO:0008121">
    <property type="term" value="F:ubiquinol-cytochrome-c reductase activity"/>
    <property type="evidence" value="ECO:0007669"/>
    <property type="project" value="InterPro"/>
</dbReference>
<dbReference type="GO" id="GO:0006122">
    <property type="term" value="P:mitochondrial electron transport, ubiquinol to cytochrome c"/>
    <property type="evidence" value="ECO:0007669"/>
    <property type="project" value="TreeGrafter"/>
</dbReference>
<dbReference type="CDD" id="cd00290">
    <property type="entry name" value="cytochrome_b_C"/>
    <property type="match status" value="1"/>
</dbReference>
<dbReference type="CDD" id="cd00284">
    <property type="entry name" value="Cytochrome_b_N"/>
    <property type="match status" value="1"/>
</dbReference>
<dbReference type="FunFam" id="1.20.810.10:FF:000002">
    <property type="entry name" value="Cytochrome b"/>
    <property type="match status" value="1"/>
</dbReference>
<dbReference type="Gene3D" id="1.20.810.10">
    <property type="entry name" value="Cytochrome Bc1 Complex, Chain C"/>
    <property type="match status" value="1"/>
</dbReference>
<dbReference type="InterPro" id="IPR005798">
    <property type="entry name" value="Cyt_b/b6_C"/>
</dbReference>
<dbReference type="InterPro" id="IPR036150">
    <property type="entry name" value="Cyt_b/b6_C_sf"/>
</dbReference>
<dbReference type="InterPro" id="IPR005797">
    <property type="entry name" value="Cyt_b/b6_N"/>
</dbReference>
<dbReference type="InterPro" id="IPR027387">
    <property type="entry name" value="Cytb/b6-like_sf"/>
</dbReference>
<dbReference type="InterPro" id="IPR030689">
    <property type="entry name" value="Cytochrome_b"/>
</dbReference>
<dbReference type="InterPro" id="IPR048260">
    <property type="entry name" value="Cytochrome_b_C_euk/bac"/>
</dbReference>
<dbReference type="InterPro" id="IPR048259">
    <property type="entry name" value="Cytochrome_b_N_euk/bac"/>
</dbReference>
<dbReference type="InterPro" id="IPR016174">
    <property type="entry name" value="Di-haem_cyt_TM"/>
</dbReference>
<dbReference type="PANTHER" id="PTHR19271">
    <property type="entry name" value="CYTOCHROME B"/>
    <property type="match status" value="1"/>
</dbReference>
<dbReference type="PANTHER" id="PTHR19271:SF16">
    <property type="entry name" value="CYTOCHROME B"/>
    <property type="match status" value="1"/>
</dbReference>
<dbReference type="Pfam" id="PF00032">
    <property type="entry name" value="Cytochrom_B_C"/>
    <property type="match status" value="1"/>
</dbReference>
<dbReference type="Pfam" id="PF00033">
    <property type="entry name" value="Cytochrome_B"/>
    <property type="match status" value="1"/>
</dbReference>
<dbReference type="PIRSF" id="PIRSF038885">
    <property type="entry name" value="COB"/>
    <property type="match status" value="1"/>
</dbReference>
<dbReference type="SUPFAM" id="SSF81648">
    <property type="entry name" value="a domain/subunit of cytochrome bc1 complex (Ubiquinol-cytochrome c reductase)"/>
    <property type="match status" value="1"/>
</dbReference>
<dbReference type="SUPFAM" id="SSF81342">
    <property type="entry name" value="Transmembrane di-heme cytochromes"/>
    <property type="match status" value="1"/>
</dbReference>
<dbReference type="PROSITE" id="PS51003">
    <property type="entry name" value="CYTB_CTER"/>
    <property type="match status" value="1"/>
</dbReference>
<dbReference type="PROSITE" id="PS51002">
    <property type="entry name" value="CYTB_NTER"/>
    <property type="match status" value="1"/>
</dbReference>
<evidence type="ECO:0000250" key="1"/>
<evidence type="ECO:0000250" key="2">
    <source>
        <dbReference type="UniProtKB" id="P00157"/>
    </source>
</evidence>
<evidence type="ECO:0000255" key="3">
    <source>
        <dbReference type="PROSITE-ProRule" id="PRU00967"/>
    </source>
</evidence>
<evidence type="ECO:0000255" key="4">
    <source>
        <dbReference type="PROSITE-ProRule" id="PRU00968"/>
    </source>
</evidence>
<proteinExistence type="inferred from homology"/>
<gene>
    <name type="primary">MT-CYB</name>
    <name type="synonym">COB</name>
    <name type="synonym">CYTB</name>
    <name type="synonym">MTCYB</name>
</gene>
<comment type="function">
    <text evidence="2">Component of the ubiquinol-cytochrome c reductase complex (complex III or cytochrome b-c1 complex) that is part of the mitochondrial respiratory chain. The b-c1 complex mediates electron transfer from ubiquinol to cytochrome c. Contributes to the generation of a proton gradient across the mitochondrial membrane that is then used for ATP synthesis.</text>
</comment>
<comment type="cofactor">
    <cofactor evidence="2">
        <name>heme b</name>
        <dbReference type="ChEBI" id="CHEBI:60344"/>
    </cofactor>
    <text evidence="2">Binds 2 heme b groups non-covalently.</text>
</comment>
<comment type="subunit">
    <text evidence="2">The cytochrome bc1 complex contains 11 subunits: 3 respiratory subunits (MT-CYB, CYC1 and UQCRFS1), 2 core proteins (UQCRC1 and UQCRC2) and 6 low-molecular weight proteins (UQCRH/QCR6, UQCRB/QCR7, UQCRQ/QCR8, UQCR10/QCR9, UQCR11/QCR10 and a cleavage product of UQCRFS1). This cytochrome bc1 complex then forms a dimer.</text>
</comment>
<comment type="subcellular location">
    <subcellularLocation>
        <location evidence="2">Mitochondrion inner membrane</location>
        <topology evidence="2">Multi-pass membrane protein</topology>
    </subcellularLocation>
</comment>
<comment type="miscellaneous">
    <text evidence="1">Heme 1 (or BL or b562) is low-potential and absorbs at about 562 nm, and heme 2 (or BH or b566) is high-potential and absorbs at about 566 nm.</text>
</comment>
<comment type="similarity">
    <text evidence="3 4">Belongs to the cytochrome b family.</text>
</comment>
<comment type="caution">
    <text evidence="2">The full-length protein contains only eight transmembrane helices, not nine as predicted by bioinformatics tools.</text>
</comment>
<geneLocation type="mitochondrion"/>
<organism>
    <name type="scientific">Tragelaphus imberbis</name>
    <name type="common">Lesser kudu</name>
    <dbReference type="NCBI Taxonomy" id="9947"/>
    <lineage>
        <taxon>Eukaryota</taxon>
        <taxon>Metazoa</taxon>
        <taxon>Chordata</taxon>
        <taxon>Craniata</taxon>
        <taxon>Vertebrata</taxon>
        <taxon>Euteleostomi</taxon>
        <taxon>Mammalia</taxon>
        <taxon>Eutheria</taxon>
        <taxon>Laurasiatheria</taxon>
        <taxon>Artiodactyla</taxon>
        <taxon>Ruminantia</taxon>
        <taxon>Pecora</taxon>
        <taxon>Bovidae</taxon>
        <taxon>Bovinae</taxon>
        <taxon>Tragelaphus</taxon>
    </lineage>
</organism>
<reference key="1">
    <citation type="journal article" date="1999" name="Mol. Phylogenet. Evol.">
        <title>Cytochrome b phylogeny of the family bovidae: resolution within the alcelaphini, antilopini, neotragini, and tragelaphini.</title>
        <authorList>
            <person name="Matthee C.A."/>
            <person name="Robinson T.J."/>
        </authorList>
    </citation>
    <scope>NUCLEOTIDE SEQUENCE [GENOMIC DNA]</scope>
</reference>
<feature type="chain" id="PRO_0000061676" description="Cytochrome b">
    <location>
        <begin position="1"/>
        <end position="379"/>
    </location>
</feature>
<feature type="transmembrane region" description="Helical" evidence="2">
    <location>
        <begin position="33"/>
        <end position="53"/>
    </location>
</feature>
<feature type="transmembrane region" description="Helical" evidence="2">
    <location>
        <begin position="77"/>
        <end position="98"/>
    </location>
</feature>
<feature type="transmembrane region" description="Helical" evidence="2">
    <location>
        <begin position="113"/>
        <end position="133"/>
    </location>
</feature>
<feature type="transmembrane region" description="Helical" evidence="2">
    <location>
        <begin position="178"/>
        <end position="198"/>
    </location>
</feature>
<feature type="transmembrane region" description="Helical" evidence="2">
    <location>
        <begin position="226"/>
        <end position="246"/>
    </location>
</feature>
<feature type="transmembrane region" description="Helical" evidence="2">
    <location>
        <begin position="288"/>
        <end position="308"/>
    </location>
</feature>
<feature type="transmembrane region" description="Helical" evidence="2">
    <location>
        <begin position="320"/>
        <end position="340"/>
    </location>
</feature>
<feature type="transmembrane region" description="Helical" evidence="2">
    <location>
        <begin position="347"/>
        <end position="367"/>
    </location>
</feature>
<feature type="binding site" description="axial binding residue" evidence="2">
    <location>
        <position position="83"/>
    </location>
    <ligand>
        <name>heme b</name>
        <dbReference type="ChEBI" id="CHEBI:60344"/>
        <label>b562</label>
    </ligand>
    <ligandPart>
        <name>Fe</name>
        <dbReference type="ChEBI" id="CHEBI:18248"/>
    </ligandPart>
</feature>
<feature type="binding site" description="axial binding residue" evidence="2">
    <location>
        <position position="97"/>
    </location>
    <ligand>
        <name>heme b</name>
        <dbReference type="ChEBI" id="CHEBI:60344"/>
        <label>b566</label>
    </ligand>
    <ligandPart>
        <name>Fe</name>
        <dbReference type="ChEBI" id="CHEBI:18248"/>
    </ligandPart>
</feature>
<feature type="binding site" description="axial binding residue" evidence="2">
    <location>
        <position position="182"/>
    </location>
    <ligand>
        <name>heme b</name>
        <dbReference type="ChEBI" id="CHEBI:60344"/>
        <label>b562</label>
    </ligand>
    <ligandPart>
        <name>Fe</name>
        <dbReference type="ChEBI" id="CHEBI:18248"/>
    </ligandPart>
</feature>
<feature type="binding site" description="axial binding residue" evidence="2">
    <location>
        <position position="196"/>
    </location>
    <ligand>
        <name>heme b</name>
        <dbReference type="ChEBI" id="CHEBI:60344"/>
        <label>b566</label>
    </ligand>
    <ligandPart>
        <name>Fe</name>
        <dbReference type="ChEBI" id="CHEBI:18248"/>
    </ligandPart>
</feature>
<feature type="binding site" evidence="2">
    <location>
        <position position="201"/>
    </location>
    <ligand>
        <name>a ubiquinone</name>
        <dbReference type="ChEBI" id="CHEBI:16389"/>
    </ligand>
</feature>
<accession>O20965</accession>
<keyword id="KW-0249">Electron transport</keyword>
<keyword id="KW-0349">Heme</keyword>
<keyword id="KW-0408">Iron</keyword>
<keyword id="KW-0472">Membrane</keyword>
<keyword id="KW-0479">Metal-binding</keyword>
<keyword id="KW-0496">Mitochondrion</keyword>
<keyword id="KW-0999">Mitochondrion inner membrane</keyword>
<keyword id="KW-0679">Respiratory chain</keyword>
<keyword id="KW-0812">Transmembrane</keyword>
<keyword id="KW-1133">Transmembrane helix</keyword>
<keyword id="KW-0813">Transport</keyword>
<keyword id="KW-0830">Ubiquinone</keyword>
<name>CYB_TRAIM</name>
<protein>
    <recommendedName>
        <fullName>Cytochrome b</fullName>
    </recommendedName>
    <alternativeName>
        <fullName>Complex III subunit 3</fullName>
    </alternativeName>
    <alternativeName>
        <fullName>Complex III subunit III</fullName>
    </alternativeName>
    <alternativeName>
        <fullName>Cytochrome b-c1 complex subunit 3</fullName>
    </alternativeName>
    <alternativeName>
        <fullName>Ubiquinol-cytochrome-c reductase complex cytochrome b subunit</fullName>
    </alternativeName>
</protein>